<reference key="1">
    <citation type="submission" date="2009-01" db="EMBL/GenBank/DDBJ databases">
        <title>Complete sequence of chromosome of Methylobacterium nodulans ORS 2060.</title>
        <authorList>
            <consortium name="US DOE Joint Genome Institute"/>
            <person name="Lucas S."/>
            <person name="Copeland A."/>
            <person name="Lapidus A."/>
            <person name="Glavina del Rio T."/>
            <person name="Dalin E."/>
            <person name="Tice H."/>
            <person name="Bruce D."/>
            <person name="Goodwin L."/>
            <person name="Pitluck S."/>
            <person name="Sims D."/>
            <person name="Brettin T."/>
            <person name="Detter J.C."/>
            <person name="Han C."/>
            <person name="Larimer F."/>
            <person name="Land M."/>
            <person name="Hauser L."/>
            <person name="Kyrpides N."/>
            <person name="Ivanova N."/>
            <person name="Marx C.J."/>
            <person name="Richardson P."/>
        </authorList>
    </citation>
    <scope>NUCLEOTIDE SEQUENCE [LARGE SCALE GENOMIC DNA]</scope>
    <source>
        <strain>LMG 21967 / CNCM I-2342 / ORS 2060</strain>
    </source>
</reference>
<name>PYRG_METNO</name>
<feature type="chain" id="PRO_1000164949" description="CTP synthase">
    <location>
        <begin position="1"/>
        <end position="542"/>
    </location>
</feature>
<feature type="domain" description="Glutamine amidotransferase type-1" evidence="1">
    <location>
        <begin position="291"/>
        <end position="541"/>
    </location>
</feature>
<feature type="region of interest" description="Amidoligase domain" evidence="1">
    <location>
        <begin position="1"/>
        <end position="265"/>
    </location>
</feature>
<feature type="active site" description="Nucleophile; for glutamine hydrolysis" evidence="1">
    <location>
        <position position="380"/>
    </location>
</feature>
<feature type="active site" evidence="1">
    <location>
        <position position="514"/>
    </location>
</feature>
<feature type="active site" evidence="1">
    <location>
        <position position="516"/>
    </location>
</feature>
<feature type="binding site" evidence="1">
    <location>
        <position position="13"/>
    </location>
    <ligand>
        <name>CTP</name>
        <dbReference type="ChEBI" id="CHEBI:37563"/>
        <note>allosteric inhibitor</note>
    </ligand>
</feature>
<feature type="binding site" evidence="1">
    <location>
        <position position="13"/>
    </location>
    <ligand>
        <name>UTP</name>
        <dbReference type="ChEBI" id="CHEBI:46398"/>
    </ligand>
</feature>
<feature type="binding site" evidence="1">
    <location>
        <begin position="14"/>
        <end position="19"/>
    </location>
    <ligand>
        <name>ATP</name>
        <dbReference type="ChEBI" id="CHEBI:30616"/>
    </ligand>
</feature>
<feature type="binding site" evidence="1">
    <location>
        <position position="71"/>
    </location>
    <ligand>
        <name>ATP</name>
        <dbReference type="ChEBI" id="CHEBI:30616"/>
    </ligand>
</feature>
<feature type="binding site" evidence="1">
    <location>
        <position position="71"/>
    </location>
    <ligand>
        <name>Mg(2+)</name>
        <dbReference type="ChEBI" id="CHEBI:18420"/>
    </ligand>
</feature>
<feature type="binding site" evidence="1">
    <location>
        <position position="139"/>
    </location>
    <ligand>
        <name>Mg(2+)</name>
        <dbReference type="ChEBI" id="CHEBI:18420"/>
    </ligand>
</feature>
<feature type="binding site" evidence="1">
    <location>
        <begin position="146"/>
        <end position="148"/>
    </location>
    <ligand>
        <name>CTP</name>
        <dbReference type="ChEBI" id="CHEBI:37563"/>
        <note>allosteric inhibitor</note>
    </ligand>
</feature>
<feature type="binding site" evidence="1">
    <location>
        <begin position="186"/>
        <end position="191"/>
    </location>
    <ligand>
        <name>CTP</name>
        <dbReference type="ChEBI" id="CHEBI:37563"/>
        <note>allosteric inhibitor</note>
    </ligand>
</feature>
<feature type="binding site" evidence="1">
    <location>
        <begin position="186"/>
        <end position="191"/>
    </location>
    <ligand>
        <name>UTP</name>
        <dbReference type="ChEBI" id="CHEBI:46398"/>
    </ligand>
</feature>
<feature type="binding site" evidence="1">
    <location>
        <position position="222"/>
    </location>
    <ligand>
        <name>CTP</name>
        <dbReference type="ChEBI" id="CHEBI:37563"/>
        <note>allosteric inhibitor</note>
    </ligand>
</feature>
<feature type="binding site" evidence="1">
    <location>
        <position position="222"/>
    </location>
    <ligand>
        <name>UTP</name>
        <dbReference type="ChEBI" id="CHEBI:46398"/>
    </ligand>
</feature>
<feature type="binding site" evidence="1">
    <location>
        <begin position="238"/>
        <end position="240"/>
    </location>
    <ligand>
        <name>ATP</name>
        <dbReference type="ChEBI" id="CHEBI:30616"/>
    </ligand>
</feature>
<feature type="binding site" evidence="1">
    <location>
        <position position="353"/>
    </location>
    <ligand>
        <name>L-glutamine</name>
        <dbReference type="ChEBI" id="CHEBI:58359"/>
    </ligand>
</feature>
<feature type="binding site" evidence="1">
    <location>
        <begin position="381"/>
        <end position="384"/>
    </location>
    <ligand>
        <name>L-glutamine</name>
        <dbReference type="ChEBI" id="CHEBI:58359"/>
    </ligand>
</feature>
<feature type="binding site" evidence="1">
    <location>
        <position position="404"/>
    </location>
    <ligand>
        <name>L-glutamine</name>
        <dbReference type="ChEBI" id="CHEBI:58359"/>
    </ligand>
</feature>
<feature type="binding site" evidence="1">
    <location>
        <position position="469"/>
    </location>
    <ligand>
        <name>L-glutamine</name>
        <dbReference type="ChEBI" id="CHEBI:58359"/>
    </ligand>
</feature>
<accession>B8IP92</accession>
<comment type="function">
    <text evidence="1">Catalyzes the ATP-dependent amination of UTP to CTP with either L-glutamine or ammonia as the source of nitrogen. Regulates intracellular CTP levels through interactions with the four ribonucleotide triphosphates.</text>
</comment>
<comment type="catalytic activity">
    <reaction evidence="1">
        <text>UTP + L-glutamine + ATP + H2O = CTP + L-glutamate + ADP + phosphate + 2 H(+)</text>
        <dbReference type="Rhea" id="RHEA:26426"/>
        <dbReference type="ChEBI" id="CHEBI:15377"/>
        <dbReference type="ChEBI" id="CHEBI:15378"/>
        <dbReference type="ChEBI" id="CHEBI:29985"/>
        <dbReference type="ChEBI" id="CHEBI:30616"/>
        <dbReference type="ChEBI" id="CHEBI:37563"/>
        <dbReference type="ChEBI" id="CHEBI:43474"/>
        <dbReference type="ChEBI" id="CHEBI:46398"/>
        <dbReference type="ChEBI" id="CHEBI:58359"/>
        <dbReference type="ChEBI" id="CHEBI:456216"/>
        <dbReference type="EC" id="6.3.4.2"/>
    </reaction>
</comment>
<comment type="catalytic activity">
    <reaction evidence="1">
        <text>L-glutamine + H2O = L-glutamate + NH4(+)</text>
        <dbReference type="Rhea" id="RHEA:15889"/>
        <dbReference type="ChEBI" id="CHEBI:15377"/>
        <dbReference type="ChEBI" id="CHEBI:28938"/>
        <dbReference type="ChEBI" id="CHEBI:29985"/>
        <dbReference type="ChEBI" id="CHEBI:58359"/>
    </reaction>
</comment>
<comment type="catalytic activity">
    <reaction evidence="1">
        <text>UTP + NH4(+) + ATP = CTP + ADP + phosphate + 2 H(+)</text>
        <dbReference type="Rhea" id="RHEA:16597"/>
        <dbReference type="ChEBI" id="CHEBI:15378"/>
        <dbReference type="ChEBI" id="CHEBI:28938"/>
        <dbReference type="ChEBI" id="CHEBI:30616"/>
        <dbReference type="ChEBI" id="CHEBI:37563"/>
        <dbReference type="ChEBI" id="CHEBI:43474"/>
        <dbReference type="ChEBI" id="CHEBI:46398"/>
        <dbReference type="ChEBI" id="CHEBI:456216"/>
    </reaction>
</comment>
<comment type="activity regulation">
    <text evidence="1">Allosterically activated by GTP, when glutamine is the substrate; GTP has no effect on the reaction when ammonia is the substrate. The allosteric effector GTP functions by stabilizing the protein conformation that binds the tetrahedral intermediate(s) formed during glutamine hydrolysis. Inhibited by the product CTP, via allosteric rather than competitive inhibition.</text>
</comment>
<comment type="pathway">
    <text evidence="1">Pyrimidine metabolism; CTP biosynthesis via de novo pathway; CTP from UDP: step 2/2.</text>
</comment>
<comment type="subunit">
    <text evidence="1">Homotetramer.</text>
</comment>
<comment type="miscellaneous">
    <text evidence="1">CTPSs have evolved a hybrid strategy for distinguishing between UTP and CTP. The overlapping regions of the product feedback inhibitory and substrate sites recognize a common feature in both compounds, the triphosphate moiety. To differentiate isosteric substrate and product pyrimidine rings, an additional pocket far from the expected kinase/ligase catalytic site, specifically recognizes the cytosine and ribose portions of the product inhibitor.</text>
</comment>
<comment type="similarity">
    <text evidence="1">Belongs to the CTP synthase family.</text>
</comment>
<organism>
    <name type="scientific">Methylobacterium nodulans (strain LMG 21967 / CNCM I-2342 / ORS 2060)</name>
    <dbReference type="NCBI Taxonomy" id="460265"/>
    <lineage>
        <taxon>Bacteria</taxon>
        <taxon>Pseudomonadati</taxon>
        <taxon>Pseudomonadota</taxon>
        <taxon>Alphaproteobacteria</taxon>
        <taxon>Hyphomicrobiales</taxon>
        <taxon>Methylobacteriaceae</taxon>
        <taxon>Methylobacterium</taxon>
    </lineage>
</organism>
<gene>
    <name evidence="1" type="primary">pyrG</name>
    <name type="ordered locus">Mnod_5568</name>
</gene>
<proteinExistence type="inferred from homology"/>
<sequence length="542" mass="59889">MTRYVFITGGVVSSLGKGLASAALAALLQARGYRVRLRKLDPYLNVDPGTMSPTQHGEVFVTDDGAETDLDLGHYERFTGVPATRADNITTGRIYLDIITKERRGDYLGATIQVIPHVTNAIKEFVLDGNEGYDFVLVEIGGTVGDIEGLPFFEAIRQLGQELPRGQCAYIHLTLLPYIPSAGELKTKPTQHSVAELRSIGIQPDILLCRCDRPIPREERRKLAQFCNVRESAVIEARDVASIYDVPLSYGEEGLDREVLALFGIEATSEPKLDRWRTISERVKNPEGEVSIAIVGKYTGLKDAYKSLIEALTHGGIANRVKVNLEWIEAEIFEREDPAPFLEGLNGILVPGGFGQRGAEGKIRAARYAREKKIPYFGICFGMQMAVVEAARSLAGIPEANSTEFGPTPEPVVGLLTEWMRGNELERRVAEGDLGGTMRLGSYTAKLAPDSRIAEIYGGTAIAERHRHRYEVNMAYRERLEARGMRFSGLSPDGLLPETVEVEGHPWFIGVQFHPELKSRPFEPHPLFKSFIGAAVVQSRLV</sequence>
<evidence type="ECO:0000255" key="1">
    <source>
        <dbReference type="HAMAP-Rule" id="MF_01227"/>
    </source>
</evidence>
<keyword id="KW-0067">ATP-binding</keyword>
<keyword id="KW-0315">Glutamine amidotransferase</keyword>
<keyword id="KW-0436">Ligase</keyword>
<keyword id="KW-0460">Magnesium</keyword>
<keyword id="KW-0479">Metal-binding</keyword>
<keyword id="KW-0547">Nucleotide-binding</keyword>
<keyword id="KW-0665">Pyrimidine biosynthesis</keyword>
<keyword id="KW-1185">Reference proteome</keyword>
<dbReference type="EC" id="6.3.4.2" evidence="1"/>
<dbReference type="EMBL" id="CP001349">
    <property type="protein sequence ID" value="ACL60410.1"/>
    <property type="molecule type" value="Genomic_DNA"/>
</dbReference>
<dbReference type="RefSeq" id="WP_015932015.1">
    <property type="nucleotide sequence ID" value="NC_011894.1"/>
</dbReference>
<dbReference type="SMR" id="B8IP92"/>
<dbReference type="STRING" id="460265.Mnod_5568"/>
<dbReference type="MEROPS" id="C26.964"/>
<dbReference type="KEGG" id="mno:Mnod_5568"/>
<dbReference type="eggNOG" id="COG0504">
    <property type="taxonomic scope" value="Bacteria"/>
</dbReference>
<dbReference type="HOGENOM" id="CLU_011675_5_0_5"/>
<dbReference type="OrthoDB" id="9801107at2"/>
<dbReference type="UniPathway" id="UPA00159">
    <property type="reaction ID" value="UER00277"/>
</dbReference>
<dbReference type="Proteomes" id="UP000008207">
    <property type="component" value="Chromosome"/>
</dbReference>
<dbReference type="GO" id="GO:0005829">
    <property type="term" value="C:cytosol"/>
    <property type="evidence" value="ECO:0007669"/>
    <property type="project" value="TreeGrafter"/>
</dbReference>
<dbReference type="GO" id="GO:0005524">
    <property type="term" value="F:ATP binding"/>
    <property type="evidence" value="ECO:0007669"/>
    <property type="project" value="UniProtKB-KW"/>
</dbReference>
<dbReference type="GO" id="GO:0003883">
    <property type="term" value="F:CTP synthase activity"/>
    <property type="evidence" value="ECO:0007669"/>
    <property type="project" value="UniProtKB-UniRule"/>
</dbReference>
<dbReference type="GO" id="GO:0004359">
    <property type="term" value="F:glutaminase activity"/>
    <property type="evidence" value="ECO:0007669"/>
    <property type="project" value="RHEA"/>
</dbReference>
<dbReference type="GO" id="GO:0042802">
    <property type="term" value="F:identical protein binding"/>
    <property type="evidence" value="ECO:0007669"/>
    <property type="project" value="TreeGrafter"/>
</dbReference>
<dbReference type="GO" id="GO:0046872">
    <property type="term" value="F:metal ion binding"/>
    <property type="evidence" value="ECO:0007669"/>
    <property type="project" value="UniProtKB-KW"/>
</dbReference>
<dbReference type="GO" id="GO:0044210">
    <property type="term" value="P:'de novo' CTP biosynthetic process"/>
    <property type="evidence" value="ECO:0007669"/>
    <property type="project" value="UniProtKB-UniRule"/>
</dbReference>
<dbReference type="GO" id="GO:0019856">
    <property type="term" value="P:pyrimidine nucleobase biosynthetic process"/>
    <property type="evidence" value="ECO:0007669"/>
    <property type="project" value="TreeGrafter"/>
</dbReference>
<dbReference type="CDD" id="cd03113">
    <property type="entry name" value="CTPS_N"/>
    <property type="match status" value="1"/>
</dbReference>
<dbReference type="CDD" id="cd01746">
    <property type="entry name" value="GATase1_CTP_Synthase"/>
    <property type="match status" value="1"/>
</dbReference>
<dbReference type="FunFam" id="3.40.50.300:FF:000009">
    <property type="entry name" value="CTP synthase"/>
    <property type="match status" value="1"/>
</dbReference>
<dbReference type="FunFam" id="3.40.50.880:FF:000002">
    <property type="entry name" value="CTP synthase"/>
    <property type="match status" value="1"/>
</dbReference>
<dbReference type="Gene3D" id="3.40.50.880">
    <property type="match status" value="1"/>
</dbReference>
<dbReference type="Gene3D" id="3.40.50.300">
    <property type="entry name" value="P-loop containing nucleotide triphosphate hydrolases"/>
    <property type="match status" value="1"/>
</dbReference>
<dbReference type="HAMAP" id="MF_01227">
    <property type="entry name" value="PyrG"/>
    <property type="match status" value="1"/>
</dbReference>
<dbReference type="InterPro" id="IPR029062">
    <property type="entry name" value="Class_I_gatase-like"/>
</dbReference>
<dbReference type="InterPro" id="IPR004468">
    <property type="entry name" value="CTP_synthase"/>
</dbReference>
<dbReference type="InterPro" id="IPR017456">
    <property type="entry name" value="CTP_synthase_N"/>
</dbReference>
<dbReference type="InterPro" id="IPR017926">
    <property type="entry name" value="GATASE"/>
</dbReference>
<dbReference type="InterPro" id="IPR033828">
    <property type="entry name" value="GATase1_CTP_Synthase"/>
</dbReference>
<dbReference type="InterPro" id="IPR027417">
    <property type="entry name" value="P-loop_NTPase"/>
</dbReference>
<dbReference type="NCBIfam" id="NF003792">
    <property type="entry name" value="PRK05380.1"/>
    <property type="match status" value="1"/>
</dbReference>
<dbReference type="NCBIfam" id="TIGR00337">
    <property type="entry name" value="PyrG"/>
    <property type="match status" value="1"/>
</dbReference>
<dbReference type="PANTHER" id="PTHR11550">
    <property type="entry name" value="CTP SYNTHASE"/>
    <property type="match status" value="1"/>
</dbReference>
<dbReference type="PANTHER" id="PTHR11550:SF0">
    <property type="entry name" value="CTP SYNTHASE-RELATED"/>
    <property type="match status" value="1"/>
</dbReference>
<dbReference type="Pfam" id="PF06418">
    <property type="entry name" value="CTP_synth_N"/>
    <property type="match status" value="1"/>
</dbReference>
<dbReference type="Pfam" id="PF00117">
    <property type="entry name" value="GATase"/>
    <property type="match status" value="1"/>
</dbReference>
<dbReference type="SUPFAM" id="SSF52317">
    <property type="entry name" value="Class I glutamine amidotransferase-like"/>
    <property type="match status" value="1"/>
</dbReference>
<dbReference type="SUPFAM" id="SSF52540">
    <property type="entry name" value="P-loop containing nucleoside triphosphate hydrolases"/>
    <property type="match status" value="1"/>
</dbReference>
<dbReference type="PROSITE" id="PS51273">
    <property type="entry name" value="GATASE_TYPE_1"/>
    <property type="match status" value="1"/>
</dbReference>
<protein>
    <recommendedName>
        <fullName evidence="1">CTP synthase</fullName>
        <ecNumber evidence="1">6.3.4.2</ecNumber>
    </recommendedName>
    <alternativeName>
        <fullName evidence="1">Cytidine 5'-triphosphate synthase</fullName>
    </alternativeName>
    <alternativeName>
        <fullName evidence="1">Cytidine triphosphate synthetase</fullName>
        <shortName evidence="1">CTP synthetase</shortName>
        <shortName evidence="1">CTPS</shortName>
    </alternativeName>
    <alternativeName>
        <fullName evidence="1">UTP--ammonia ligase</fullName>
    </alternativeName>
</protein>